<evidence type="ECO:0000255" key="1">
    <source>
        <dbReference type="HAMAP-Rule" id="MF_01366"/>
    </source>
</evidence>
<evidence type="ECO:0000305" key="2"/>
<keyword id="KW-0687">Ribonucleoprotein</keyword>
<keyword id="KW-0689">Ribosomal protein</keyword>
<sequence>MKTLSAKPAEVQHDWFVVDATGKTLGRLATEIARRLRGKHKTSYTPHVDTGDYIIVINAEQVQVTGNKALDKKYYRHTEFPGGLKETNFEKLVAHKPEEIFERAVKGMLPKGPLGYAMIKKMKVYAGSEHPHAAQQPQVLDI</sequence>
<gene>
    <name evidence="1" type="primary">rplM</name>
    <name type="ordered locus">ACICU_03199</name>
</gene>
<name>RL13_ACIBC</name>
<accession>B2HZ29</accession>
<comment type="function">
    <text evidence="1">This protein is one of the early assembly proteins of the 50S ribosomal subunit, although it is not seen to bind rRNA by itself. It is important during the early stages of 50S assembly.</text>
</comment>
<comment type="subunit">
    <text evidence="1">Part of the 50S ribosomal subunit.</text>
</comment>
<comment type="similarity">
    <text evidence="1">Belongs to the universal ribosomal protein uL13 family.</text>
</comment>
<feature type="chain" id="PRO_1000144077" description="Large ribosomal subunit protein uL13">
    <location>
        <begin position="1"/>
        <end position="142"/>
    </location>
</feature>
<dbReference type="EMBL" id="CP000863">
    <property type="protein sequence ID" value="ACC58511.1"/>
    <property type="molecule type" value="Genomic_DNA"/>
</dbReference>
<dbReference type="RefSeq" id="WP_000854895.1">
    <property type="nucleotide sequence ID" value="NZ_CP031380.1"/>
</dbReference>
<dbReference type="SMR" id="B2HZ29"/>
<dbReference type="KEGG" id="abc:ACICU_03199"/>
<dbReference type="HOGENOM" id="CLU_082184_2_2_6"/>
<dbReference type="Proteomes" id="UP000008839">
    <property type="component" value="Chromosome"/>
</dbReference>
<dbReference type="GO" id="GO:0022625">
    <property type="term" value="C:cytosolic large ribosomal subunit"/>
    <property type="evidence" value="ECO:0007669"/>
    <property type="project" value="TreeGrafter"/>
</dbReference>
<dbReference type="GO" id="GO:0003729">
    <property type="term" value="F:mRNA binding"/>
    <property type="evidence" value="ECO:0007669"/>
    <property type="project" value="TreeGrafter"/>
</dbReference>
<dbReference type="GO" id="GO:0003735">
    <property type="term" value="F:structural constituent of ribosome"/>
    <property type="evidence" value="ECO:0007669"/>
    <property type="project" value="InterPro"/>
</dbReference>
<dbReference type="GO" id="GO:0017148">
    <property type="term" value="P:negative regulation of translation"/>
    <property type="evidence" value="ECO:0007669"/>
    <property type="project" value="TreeGrafter"/>
</dbReference>
<dbReference type="GO" id="GO:0006412">
    <property type="term" value="P:translation"/>
    <property type="evidence" value="ECO:0007669"/>
    <property type="project" value="UniProtKB-UniRule"/>
</dbReference>
<dbReference type="CDD" id="cd00392">
    <property type="entry name" value="Ribosomal_L13"/>
    <property type="match status" value="1"/>
</dbReference>
<dbReference type="FunFam" id="3.90.1180.10:FF:000001">
    <property type="entry name" value="50S ribosomal protein L13"/>
    <property type="match status" value="1"/>
</dbReference>
<dbReference type="Gene3D" id="3.90.1180.10">
    <property type="entry name" value="Ribosomal protein L13"/>
    <property type="match status" value="1"/>
</dbReference>
<dbReference type="HAMAP" id="MF_01366">
    <property type="entry name" value="Ribosomal_uL13"/>
    <property type="match status" value="1"/>
</dbReference>
<dbReference type="InterPro" id="IPR005822">
    <property type="entry name" value="Ribosomal_uL13"/>
</dbReference>
<dbReference type="InterPro" id="IPR005823">
    <property type="entry name" value="Ribosomal_uL13_bac-type"/>
</dbReference>
<dbReference type="InterPro" id="IPR036899">
    <property type="entry name" value="Ribosomal_uL13_sf"/>
</dbReference>
<dbReference type="NCBIfam" id="TIGR01066">
    <property type="entry name" value="rplM_bact"/>
    <property type="match status" value="1"/>
</dbReference>
<dbReference type="PANTHER" id="PTHR11545:SF2">
    <property type="entry name" value="LARGE RIBOSOMAL SUBUNIT PROTEIN UL13M"/>
    <property type="match status" value="1"/>
</dbReference>
<dbReference type="PANTHER" id="PTHR11545">
    <property type="entry name" value="RIBOSOMAL PROTEIN L13"/>
    <property type="match status" value="1"/>
</dbReference>
<dbReference type="Pfam" id="PF00572">
    <property type="entry name" value="Ribosomal_L13"/>
    <property type="match status" value="1"/>
</dbReference>
<dbReference type="PIRSF" id="PIRSF002181">
    <property type="entry name" value="Ribosomal_L13"/>
    <property type="match status" value="1"/>
</dbReference>
<dbReference type="SUPFAM" id="SSF52161">
    <property type="entry name" value="Ribosomal protein L13"/>
    <property type="match status" value="1"/>
</dbReference>
<organism>
    <name type="scientific">Acinetobacter baumannii (strain ACICU)</name>
    <dbReference type="NCBI Taxonomy" id="405416"/>
    <lineage>
        <taxon>Bacteria</taxon>
        <taxon>Pseudomonadati</taxon>
        <taxon>Pseudomonadota</taxon>
        <taxon>Gammaproteobacteria</taxon>
        <taxon>Moraxellales</taxon>
        <taxon>Moraxellaceae</taxon>
        <taxon>Acinetobacter</taxon>
        <taxon>Acinetobacter calcoaceticus/baumannii complex</taxon>
    </lineage>
</organism>
<reference key="1">
    <citation type="journal article" date="2008" name="Antimicrob. Agents Chemother.">
        <title>Whole-genome pyrosequencing of an epidemic multidrug-resistant Acinetobacter baumannii strain belonging to the European clone II group.</title>
        <authorList>
            <person name="Iacono M."/>
            <person name="Villa L."/>
            <person name="Fortini D."/>
            <person name="Bordoni R."/>
            <person name="Imperi F."/>
            <person name="Bonnal R.J."/>
            <person name="Sicheritz-Ponten T."/>
            <person name="De Bellis G."/>
            <person name="Visca P."/>
            <person name="Cassone A."/>
            <person name="Carattoli A."/>
        </authorList>
    </citation>
    <scope>NUCLEOTIDE SEQUENCE [LARGE SCALE GENOMIC DNA]</scope>
    <source>
        <strain>ACICU</strain>
    </source>
</reference>
<proteinExistence type="inferred from homology"/>
<protein>
    <recommendedName>
        <fullName evidence="1">Large ribosomal subunit protein uL13</fullName>
    </recommendedName>
    <alternativeName>
        <fullName evidence="2">50S ribosomal protein L13</fullName>
    </alternativeName>
</protein>